<feature type="chain" id="PRO_0000207945" description="Protein PsbN">
    <location>
        <begin position="1"/>
        <end position="43"/>
    </location>
</feature>
<feature type="transmembrane region" description="Helical" evidence="1">
    <location>
        <begin position="7"/>
        <end position="27"/>
    </location>
</feature>
<protein>
    <recommendedName>
        <fullName evidence="1">Protein PsbN</fullName>
    </recommendedName>
</protein>
<gene>
    <name evidence="1" type="primary">psbN</name>
</gene>
<organism>
    <name type="scientific">Psilotum nudum</name>
    <name type="common">Whisk fern</name>
    <name type="synonym">Lycopodium nudum</name>
    <dbReference type="NCBI Taxonomy" id="3240"/>
    <lineage>
        <taxon>Eukaryota</taxon>
        <taxon>Viridiplantae</taxon>
        <taxon>Streptophyta</taxon>
        <taxon>Embryophyta</taxon>
        <taxon>Tracheophyta</taxon>
        <taxon>Polypodiopsida</taxon>
        <taxon>Ophioglossidae</taxon>
        <taxon>Psilotales</taxon>
        <taxon>Psilotaceae</taxon>
        <taxon>Psilotum</taxon>
    </lineage>
</organism>
<dbReference type="EMBL" id="AP004638">
    <property type="protein sequence ID" value="BAB84244.1"/>
    <property type="molecule type" value="Genomic_DNA"/>
</dbReference>
<dbReference type="RefSeq" id="NP_569656.1">
    <property type="nucleotide sequence ID" value="NC_003386.1"/>
</dbReference>
<dbReference type="SMR" id="Q8WHZ5"/>
<dbReference type="GeneID" id="2545150"/>
<dbReference type="GO" id="GO:0009535">
    <property type="term" value="C:chloroplast thylakoid membrane"/>
    <property type="evidence" value="ECO:0007669"/>
    <property type="project" value="UniProtKB-SubCell"/>
</dbReference>
<dbReference type="GO" id="GO:0015979">
    <property type="term" value="P:photosynthesis"/>
    <property type="evidence" value="ECO:0007669"/>
    <property type="project" value="InterPro"/>
</dbReference>
<dbReference type="HAMAP" id="MF_00293">
    <property type="entry name" value="PSII_PsbN"/>
    <property type="match status" value="1"/>
</dbReference>
<dbReference type="InterPro" id="IPR003398">
    <property type="entry name" value="PSII_PsbN"/>
</dbReference>
<dbReference type="PANTHER" id="PTHR35326">
    <property type="entry name" value="PROTEIN PSBN"/>
    <property type="match status" value="1"/>
</dbReference>
<dbReference type="PANTHER" id="PTHR35326:SF3">
    <property type="entry name" value="PROTEIN PSBN"/>
    <property type="match status" value="1"/>
</dbReference>
<dbReference type="Pfam" id="PF02468">
    <property type="entry name" value="PsbN"/>
    <property type="match status" value="1"/>
</dbReference>
<evidence type="ECO:0000255" key="1">
    <source>
        <dbReference type="HAMAP-Rule" id="MF_00293"/>
    </source>
</evidence>
<name>PSBN_PSINU</name>
<keyword id="KW-0150">Chloroplast</keyword>
<keyword id="KW-0472">Membrane</keyword>
<keyword id="KW-0934">Plastid</keyword>
<keyword id="KW-0793">Thylakoid</keyword>
<keyword id="KW-0812">Transmembrane</keyword>
<keyword id="KW-1133">Transmembrane helix</keyword>
<reference key="1">
    <citation type="journal article" date="2004" name="Mol. Biol. Evol.">
        <title>Chloroplast phylogeny indicates that bryophytes are monophyletic.</title>
        <authorList>
            <person name="Nishiyama T."/>
            <person name="Wolf P.G."/>
            <person name="Kugita M."/>
            <person name="Sinclair R.B."/>
            <person name="Sugita M."/>
            <person name="Sugiura C."/>
            <person name="Wakasugi T."/>
            <person name="Yamada K."/>
            <person name="Yoshinaga K."/>
            <person name="Yamaguchi K."/>
            <person name="Ueda K."/>
            <person name="Hasebe M."/>
        </authorList>
    </citation>
    <scope>NUCLEOTIDE SEQUENCE [LARGE SCALE GENOMIC DNA]</scope>
    <source>
        <strain>Kingyoku</strain>
    </source>
</reference>
<proteinExistence type="inferred from homology"/>
<comment type="function">
    <text evidence="1">May play a role in photosystem I and II biogenesis.</text>
</comment>
<comment type="subcellular location">
    <subcellularLocation>
        <location evidence="1">Plastid</location>
        <location evidence="1">Chloroplast thylakoid membrane</location>
        <topology evidence="1">Single-pass membrane protein</topology>
    </subcellularLocation>
</comment>
<comment type="similarity">
    <text evidence="1">Belongs to the PsbN family.</text>
</comment>
<comment type="caution">
    <text evidence="1">Originally thought to be a component of PSII; based on experiments in Synechocystis, N.tabacum and barley, and its absence from PSII in T.elongatus and T.vulcanus, this is probably not true.</text>
</comment>
<sequence>METATLIAIFISCLIVSFTGYALYTAFGQPSKELRDPFEEHED</sequence>
<accession>Q8WHZ5</accession>
<geneLocation type="chloroplast"/>